<protein>
    <recommendedName>
        <fullName evidence="5">Low-salt glycan biosynthesis sulfotransferase Agl7</fullName>
        <ecNumber evidence="5">2.8.2.-</ecNumber>
    </recommendedName>
</protein>
<accession>D4GU60</accession>
<reference key="1">
    <citation type="journal article" date="2010" name="PLoS ONE">
        <title>The complete genome sequence of Haloferax volcanii DS2, a model archaeon.</title>
        <authorList>
            <person name="Hartman A.L."/>
            <person name="Norais C."/>
            <person name="Badger J.H."/>
            <person name="Delmas S."/>
            <person name="Haldenby S."/>
            <person name="Madupu R."/>
            <person name="Robinson J."/>
            <person name="Khouri H."/>
            <person name="Ren Q."/>
            <person name="Lowe T.M."/>
            <person name="Maupin-Furlow J."/>
            <person name="Pohlschroder M."/>
            <person name="Daniels C."/>
            <person name="Pfeiffer F."/>
            <person name="Allers T."/>
            <person name="Eisen J.A."/>
        </authorList>
    </citation>
    <scope>NUCLEOTIDE SEQUENCE [LARGE SCALE GENOMIC DNA]</scope>
    <source>
        <strain>ATCC 29605 / DSM 3757 / JCM 8879 / NBRC 14742 / NCIMB 2012 / VKM B-1768 / DS2</strain>
    </source>
</reference>
<reference key="2">
    <citation type="journal article" date="2014" name="PLoS Genet.">
        <title>Phylogenetically driven sequencing of extremely halophilic archaea reveals strategies for static and dynamic osmo-response.</title>
        <authorList>
            <person name="Becker E.A."/>
            <person name="Seitzer P.M."/>
            <person name="Tritt A."/>
            <person name="Larsen D."/>
            <person name="Krusor M."/>
            <person name="Yao A.I."/>
            <person name="Wu D."/>
            <person name="Madern D."/>
            <person name="Eisen J.A."/>
            <person name="Darling A.E."/>
            <person name="Facciotti M.T."/>
        </authorList>
    </citation>
    <scope>NUCLEOTIDE SEQUENCE [LARGE SCALE GENOMIC DNA]</scope>
    <source>
        <strain>ATCC 29605 / DSM 3757 / JCM 8879 / NBRC 14742 / NCIMB 2012 / VKM B-1768 / DS2</strain>
    </source>
</reference>
<reference key="3">
    <citation type="journal article" date="2013" name="MBio">
        <title>Two distinct N-glycosylation pathways process the Haloferax volcanii S-layer glycoprotein upon changes in environmental salinity.</title>
        <authorList>
            <person name="Kaminski L."/>
            <person name="Guan Z."/>
            <person name="Yurist-Doutsch S."/>
            <person name="Eichler J."/>
        </authorList>
    </citation>
    <scope>FUNCTION</scope>
    <scope>PATHWAY</scope>
    <scope>DISRUPTION PHENOTYPE</scope>
    <source>
        <strain>ATCC 29605 / DSM 3757 / JCM 8879 / NBRC 14742 / NCIMB 2012 / VKM B-1768 / DS2</strain>
    </source>
</reference>
<name>AGL7_HALVD</name>
<keyword id="KW-0106">Calcium</keyword>
<keyword id="KW-0479">Metal-binding</keyword>
<keyword id="KW-1185">Reference proteome</keyword>
<keyword id="KW-0808">Transferase</keyword>
<comment type="function">
    <text evidence="2">Involved in N-glycan biosynthetic pathway that takes place under low-salt conditions (1.75 M instead of 3.4 M). Participates in the formation of the tetrasaccharide present at 'Asn-532' of S-layer glycoprotein Csg, consisting of a sulfated hexose, 2 hexoses and rhamnose. Mediates sulfation of sugar 1 in the tetrasaccharide.</text>
</comment>
<comment type="cofactor">
    <cofactor evidence="1">
        <name>Ca(2+)</name>
        <dbReference type="ChEBI" id="CHEBI:29108"/>
    </cofactor>
    <text evidence="1">Binds 1 Ca(2+) ion per subunit.</text>
</comment>
<comment type="pathway">
    <text evidence="2">Protein modification; protein glycosylation.</text>
</comment>
<comment type="pathway">
    <text evidence="2">Cell surface structure biogenesis; S-layer biogenesis.</text>
</comment>
<comment type="disruption phenotype">
    <text evidence="2">Impaired formation of the tetrasaccharide present at 'Asn-532' of S-layer glycoprotein Csg with formation of a tetrasaccharide that is not sulfated. No effect on 'Asn-47' and 'Asn-117' glycosylation of S-layer glycoprotein Csg.</text>
</comment>
<comment type="similarity">
    <text evidence="4">Belongs to the sulfatase family.</text>
</comment>
<organism>
    <name type="scientific">Haloferax volcanii (strain ATCC 29605 / DSM 3757 / JCM 8879 / NBRC 14742 / NCIMB 2012 / VKM B-1768 / DS2)</name>
    <name type="common">Halobacterium volcanii</name>
    <dbReference type="NCBI Taxonomy" id="309800"/>
    <lineage>
        <taxon>Archaea</taxon>
        <taxon>Methanobacteriati</taxon>
        <taxon>Methanobacteriota</taxon>
        <taxon>Stenosarchaea group</taxon>
        <taxon>Halobacteria</taxon>
        <taxon>Halobacteriales</taxon>
        <taxon>Haloferacaceae</taxon>
        <taxon>Haloferax</taxon>
    </lineage>
</organism>
<feature type="chain" id="PRO_0000428772" description="Low-salt glycan biosynthesis sulfotransferase Agl7">
    <location>
        <begin position="1"/>
        <end position="405"/>
    </location>
</feature>
<feature type="binding site" evidence="1">
    <location>
        <position position="24"/>
    </location>
    <ligand>
        <name>Ca(2+)</name>
        <dbReference type="ChEBI" id="CHEBI:29108"/>
    </ligand>
</feature>
<feature type="binding site" evidence="1">
    <location>
        <position position="201"/>
    </location>
    <ligand>
        <name>Ca(2+)</name>
        <dbReference type="ChEBI" id="CHEBI:29108"/>
    </ligand>
</feature>
<feature type="binding site" evidence="1">
    <location>
        <position position="202"/>
    </location>
    <ligand>
        <name>Ca(2+)</name>
        <dbReference type="ChEBI" id="CHEBI:29108"/>
    </ligand>
</feature>
<sequence length="405" mass="45557">MITGPISNLSGESGFENVFIFISDSLRYDALPERIRSKGLTIKTIAAAPWTASSIPSLMSGKYPSSHNVWMFEDRLPQRPPLLSEQEDWDAGFDSEKHWLKFESSEKPPVKMLRLDGEQKLADIEPPFVHVVHDLGPHAPYGFENDEYETGPYFRDYNDPKDLQQKYQNDAEKSANYFLEILDKLENLGLREDTLCVFTSDHGELLGEGGRLGGKWGHSTPLCPELLEVPMTFIGKGIPKGETLSGVASGVDLAPTCLSAVGREIGHVDGIDLWAETPDEDRRVRSDVWQRYNAFGRELPVYVASGLWDNDGGWVKHRRSKLLRMAYYGYDVFLGDYAPPARSTTGISELVSGLKFWGRDWEKFGNTTISLQEAQKELSDELVRSEDSVELSEEQTEHLEALGYV</sequence>
<dbReference type="EC" id="2.8.2.-" evidence="5"/>
<dbReference type="EMBL" id="CP001956">
    <property type="protein sequence ID" value="ADE02348.1"/>
    <property type="molecule type" value="Genomic_DNA"/>
</dbReference>
<dbReference type="EMBL" id="AOHU01000038">
    <property type="protein sequence ID" value="ELY34562.1"/>
    <property type="molecule type" value="Genomic_DNA"/>
</dbReference>
<dbReference type="RefSeq" id="WP_004041932.1">
    <property type="nucleotide sequence ID" value="NC_013967.1"/>
</dbReference>
<dbReference type="SMR" id="D4GU60"/>
<dbReference type="STRING" id="309800.HVO_2046"/>
<dbReference type="PaxDb" id="309800-C498_05521"/>
<dbReference type="EnsemblBacteria" id="ADE02348">
    <property type="protein sequence ID" value="ADE02348"/>
    <property type="gene ID" value="HVO_2046"/>
</dbReference>
<dbReference type="GeneID" id="8926286"/>
<dbReference type="KEGG" id="hvo:HVO_2046"/>
<dbReference type="eggNOG" id="arCOG02785">
    <property type="taxonomic scope" value="Archaea"/>
</dbReference>
<dbReference type="HOGENOM" id="CLU_691886_0_0_2"/>
<dbReference type="OrthoDB" id="3164at2157"/>
<dbReference type="UniPathway" id="UPA00378"/>
<dbReference type="UniPathway" id="UPA00977"/>
<dbReference type="Proteomes" id="UP000008243">
    <property type="component" value="Chromosome"/>
</dbReference>
<dbReference type="Proteomes" id="UP000011532">
    <property type="component" value="Unassembled WGS sequence"/>
</dbReference>
<dbReference type="GO" id="GO:0004065">
    <property type="term" value="F:arylsulfatase activity"/>
    <property type="evidence" value="ECO:0007669"/>
    <property type="project" value="TreeGrafter"/>
</dbReference>
<dbReference type="GO" id="GO:0046872">
    <property type="term" value="F:metal ion binding"/>
    <property type="evidence" value="ECO:0007669"/>
    <property type="project" value="UniProtKB-KW"/>
</dbReference>
<dbReference type="GO" id="GO:0016740">
    <property type="term" value="F:transferase activity"/>
    <property type="evidence" value="ECO:0007669"/>
    <property type="project" value="UniProtKB-KW"/>
</dbReference>
<dbReference type="GO" id="GO:0006486">
    <property type="term" value="P:protein glycosylation"/>
    <property type="evidence" value="ECO:0007669"/>
    <property type="project" value="UniProtKB-UniPathway"/>
</dbReference>
<dbReference type="GO" id="GO:0045232">
    <property type="term" value="P:S-layer organization"/>
    <property type="evidence" value="ECO:0007669"/>
    <property type="project" value="UniProtKB-UniPathway"/>
</dbReference>
<dbReference type="Gene3D" id="3.40.720.10">
    <property type="entry name" value="Alkaline Phosphatase, subunit A"/>
    <property type="match status" value="2"/>
</dbReference>
<dbReference type="InterPro" id="IPR017850">
    <property type="entry name" value="Alkaline_phosphatase_core_sf"/>
</dbReference>
<dbReference type="InterPro" id="IPR050738">
    <property type="entry name" value="Sulfatase"/>
</dbReference>
<dbReference type="InterPro" id="IPR000917">
    <property type="entry name" value="Sulfatase_N"/>
</dbReference>
<dbReference type="PANTHER" id="PTHR42693:SF33">
    <property type="entry name" value="ARYLSULFATASE"/>
    <property type="match status" value="1"/>
</dbReference>
<dbReference type="PANTHER" id="PTHR42693">
    <property type="entry name" value="ARYLSULFATASE FAMILY MEMBER"/>
    <property type="match status" value="1"/>
</dbReference>
<dbReference type="Pfam" id="PF00884">
    <property type="entry name" value="Sulfatase"/>
    <property type="match status" value="1"/>
</dbReference>
<dbReference type="SUPFAM" id="SSF53649">
    <property type="entry name" value="Alkaline phosphatase-like"/>
    <property type="match status" value="1"/>
</dbReference>
<proteinExistence type="inferred from homology"/>
<evidence type="ECO:0000250" key="1"/>
<evidence type="ECO:0000269" key="2">
    <source>
    </source>
</evidence>
<evidence type="ECO:0000303" key="3">
    <source>
    </source>
</evidence>
<evidence type="ECO:0000305" key="4"/>
<evidence type="ECO:0000305" key="5">
    <source>
    </source>
</evidence>
<gene>
    <name evidence="3" type="primary">agl7</name>
    <name type="ordered locus">HVO_2046</name>
    <name type="ORF">C498_05521</name>
</gene>